<organism>
    <name type="scientific">Lacticaseibacillus paracasei (strain ATCC 334 / BCRC 17002 / CCUG 31169 / CIP 107868 / KCTC 3260 / NRRL B-441)</name>
    <name type="common">Lactobacillus paracasei</name>
    <dbReference type="NCBI Taxonomy" id="321967"/>
    <lineage>
        <taxon>Bacteria</taxon>
        <taxon>Bacillati</taxon>
        <taxon>Bacillota</taxon>
        <taxon>Bacilli</taxon>
        <taxon>Lactobacillales</taxon>
        <taxon>Lactobacillaceae</taxon>
        <taxon>Lacticaseibacillus</taxon>
    </lineage>
</organism>
<accession>Q03AZ9</accession>
<feature type="chain" id="PRO_1000061527" description="Putative pre-16S rRNA nuclease">
    <location>
        <begin position="1"/>
        <end position="144"/>
    </location>
</feature>
<evidence type="ECO:0000255" key="1">
    <source>
        <dbReference type="HAMAP-Rule" id="MF_00651"/>
    </source>
</evidence>
<sequence>MRLMGLDVGSRTVGVAVSDPLGWTAQGLEIIRINEDKEQFGIARLKELVKQYEVTAFVLGLPKNMNNSIGPRAEKSQAYGELLKTTFGLPVDFIDERLTTVEASRMLIEEADASRKRQKQVIDKLAAQMILQNYLDAKGPLTKQ</sequence>
<keyword id="KW-0963">Cytoplasm</keyword>
<keyword id="KW-0378">Hydrolase</keyword>
<keyword id="KW-0540">Nuclease</keyword>
<keyword id="KW-1185">Reference proteome</keyword>
<keyword id="KW-0690">Ribosome biogenesis</keyword>
<dbReference type="EC" id="3.1.-.-" evidence="1"/>
<dbReference type="EMBL" id="CP000423">
    <property type="protein sequence ID" value="ABJ69623.1"/>
    <property type="molecule type" value="Genomic_DNA"/>
</dbReference>
<dbReference type="RefSeq" id="YP_806065.1">
    <property type="nucleotide sequence ID" value="NC_008526.1"/>
</dbReference>
<dbReference type="SMR" id="Q03AZ9"/>
<dbReference type="STRING" id="321967.LSEI_0787"/>
<dbReference type="PaxDb" id="321967-LSEI_0787"/>
<dbReference type="KEGG" id="lca:LSEI_0787"/>
<dbReference type="PATRIC" id="fig|321967.11.peg.789"/>
<dbReference type="HOGENOM" id="CLU_098240_2_0_9"/>
<dbReference type="Proteomes" id="UP000001651">
    <property type="component" value="Chromosome"/>
</dbReference>
<dbReference type="GO" id="GO:0005829">
    <property type="term" value="C:cytosol"/>
    <property type="evidence" value="ECO:0007669"/>
    <property type="project" value="TreeGrafter"/>
</dbReference>
<dbReference type="GO" id="GO:0004518">
    <property type="term" value="F:nuclease activity"/>
    <property type="evidence" value="ECO:0007669"/>
    <property type="project" value="UniProtKB-KW"/>
</dbReference>
<dbReference type="GO" id="GO:0000967">
    <property type="term" value="P:rRNA 5'-end processing"/>
    <property type="evidence" value="ECO:0007669"/>
    <property type="project" value="UniProtKB-UniRule"/>
</dbReference>
<dbReference type="CDD" id="cd16964">
    <property type="entry name" value="YqgF"/>
    <property type="match status" value="1"/>
</dbReference>
<dbReference type="FunFam" id="3.30.420.140:FF:000003">
    <property type="entry name" value="Putative pre-16S rRNA nuclease"/>
    <property type="match status" value="1"/>
</dbReference>
<dbReference type="Gene3D" id="3.30.420.140">
    <property type="entry name" value="YqgF/RNase H-like domain"/>
    <property type="match status" value="1"/>
</dbReference>
<dbReference type="HAMAP" id="MF_00651">
    <property type="entry name" value="Nuclease_YqgF"/>
    <property type="match status" value="1"/>
</dbReference>
<dbReference type="InterPro" id="IPR012337">
    <property type="entry name" value="RNaseH-like_sf"/>
</dbReference>
<dbReference type="InterPro" id="IPR005227">
    <property type="entry name" value="YqgF"/>
</dbReference>
<dbReference type="InterPro" id="IPR006641">
    <property type="entry name" value="YqgF/RNaseH-like_dom"/>
</dbReference>
<dbReference type="InterPro" id="IPR037027">
    <property type="entry name" value="YqgF/RNaseH-like_dom_sf"/>
</dbReference>
<dbReference type="NCBIfam" id="TIGR00250">
    <property type="entry name" value="RNAse_H_YqgF"/>
    <property type="match status" value="1"/>
</dbReference>
<dbReference type="PANTHER" id="PTHR33317">
    <property type="entry name" value="POLYNUCLEOTIDYL TRANSFERASE, RIBONUCLEASE H-LIKE SUPERFAMILY PROTEIN"/>
    <property type="match status" value="1"/>
</dbReference>
<dbReference type="PANTHER" id="PTHR33317:SF4">
    <property type="entry name" value="POLYNUCLEOTIDYL TRANSFERASE, RIBONUCLEASE H-LIKE SUPERFAMILY PROTEIN"/>
    <property type="match status" value="1"/>
</dbReference>
<dbReference type="Pfam" id="PF03652">
    <property type="entry name" value="RuvX"/>
    <property type="match status" value="1"/>
</dbReference>
<dbReference type="SMART" id="SM00732">
    <property type="entry name" value="YqgFc"/>
    <property type="match status" value="1"/>
</dbReference>
<dbReference type="SUPFAM" id="SSF53098">
    <property type="entry name" value="Ribonuclease H-like"/>
    <property type="match status" value="1"/>
</dbReference>
<reference key="1">
    <citation type="journal article" date="2006" name="Proc. Natl. Acad. Sci. U.S.A.">
        <title>Comparative genomics of the lactic acid bacteria.</title>
        <authorList>
            <person name="Makarova K.S."/>
            <person name="Slesarev A."/>
            <person name="Wolf Y.I."/>
            <person name="Sorokin A."/>
            <person name="Mirkin B."/>
            <person name="Koonin E.V."/>
            <person name="Pavlov A."/>
            <person name="Pavlova N."/>
            <person name="Karamychev V."/>
            <person name="Polouchine N."/>
            <person name="Shakhova V."/>
            <person name="Grigoriev I."/>
            <person name="Lou Y."/>
            <person name="Rohksar D."/>
            <person name="Lucas S."/>
            <person name="Huang K."/>
            <person name="Goodstein D.M."/>
            <person name="Hawkins T."/>
            <person name="Plengvidhya V."/>
            <person name="Welker D."/>
            <person name="Hughes J."/>
            <person name="Goh Y."/>
            <person name="Benson A."/>
            <person name="Baldwin K."/>
            <person name="Lee J.-H."/>
            <person name="Diaz-Muniz I."/>
            <person name="Dosti B."/>
            <person name="Smeianov V."/>
            <person name="Wechter W."/>
            <person name="Barabote R."/>
            <person name="Lorca G."/>
            <person name="Altermann E."/>
            <person name="Barrangou R."/>
            <person name="Ganesan B."/>
            <person name="Xie Y."/>
            <person name="Rawsthorne H."/>
            <person name="Tamir D."/>
            <person name="Parker C."/>
            <person name="Breidt F."/>
            <person name="Broadbent J.R."/>
            <person name="Hutkins R."/>
            <person name="O'Sullivan D."/>
            <person name="Steele J."/>
            <person name="Unlu G."/>
            <person name="Saier M.H. Jr."/>
            <person name="Klaenhammer T."/>
            <person name="Richardson P."/>
            <person name="Kozyavkin S."/>
            <person name="Weimer B.C."/>
            <person name="Mills D.A."/>
        </authorList>
    </citation>
    <scope>NUCLEOTIDE SEQUENCE [LARGE SCALE GENOMIC DNA]</scope>
    <source>
        <strain>ATCC 334 / BCRC 17002 / CCUG 31169 / CIP 107868 / KCTC 3260 / NRRL B-441</strain>
    </source>
</reference>
<name>YQGF_LACP3</name>
<protein>
    <recommendedName>
        <fullName evidence="1">Putative pre-16S rRNA nuclease</fullName>
        <ecNumber evidence="1">3.1.-.-</ecNumber>
    </recommendedName>
</protein>
<gene>
    <name type="ordered locus">LSEI_0787</name>
</gene>
<comment type="function">
    <text evidence="1">Could be a nuclease involved in processing of the 5'-end of pre-16S rRNA.</text>
</comment>
<comment type="subcellular location">
    <subcellularLocation>
        <location evidence="1">Cytoplasm</location>
    </subcellularLocation>
</comment>
<comment type="similarity">
    <text evidence="1">Belongs to the YqgF nuclease family.</text>
</comment>
<proteinExistence type="inferred from homology"/>